<evidence type="ECO:0000255" key="1">
    <source>
        <dbReference type="HAMAP-Rule" id="MF_00501"/>
    </source>
</evidence>
<evidence type="ECO:0000305" key="2"/>
<sequence>MPKSDIHPTWYPDAKVICNGEVVMTTGATQPEIHVDVWSGNHPFFTGTQKILDTEGRVDRFMKKYGMGSTKGKDDDASS</sequence>
<name>RL31_SYNS9</name>
<dbReference type="EMBL" id="CP000097">
    <property type="protein sequence ID" value="ABB26941.1"/>
    <property type="molecule type" value="Genomic_DNA"/>
</dbReference>
<dbReference type="RefSeq" id="WP_011360734.1">
    <property type="nucleotide sequence ID" value="NC_007513.1"/>
</dbReference>
<dbReference type="STRING" id="316279.Syncc9902_1983"/>
<dbReference type="KEGG" id="sye:Syncc9902_1983"/>
<dbReference type="eggNOG" id="COG0254">
    <property type="taxonomic scope" value="Bacteria"/>
</dbReference>
<dbReference type="HOGENOM" id="CLU_114306_1_2_3"/>
<dbReference type="OrthoDB" id="9803251at2"/>
<dbReference type="Proteomes" id="UP000002712">
    <property type="component" value="Chromosome"/>
</dbReference>
<dbReference type="GO" id="GO:1990904">
    <property type="term" value="C:ribonucleoprotein complex"/>
    <property type="evidence" value="ECO:0007669"/>
    <property type="project" value="UniProtKB-KW"/>
</dbReference>
<dbReference type="GO" id="GO:0005840">
    <property type="term" value="C:ribosome"/>
    <property type="evidence" value="ECO:0007669"/>
    <property type="project" value="UniProtKB-KW"/>
</dbReference>
<dbReference type="GO" id="GO:0019843">
    <property type="term" value="F:rRNA binding"/>
    <property type="evidence" value="ECO:0007669"/>
    <property type="project" value="UniProtKB-KW"/>
</dbReference>
<dbReference type="GO" id="GO:0003735">
    <property type="term" value="F:structural constituent of ribosome"/>
    <property type="evidence" value="ECO:0007669"/>
    <property type="project" value="InterPro"/>
</dbReference>
<dbReference type="GO" id="GO:0006412">
    <property type="term" value="P:translation"/>
    <property type="evidence" value="ECO:0007669"/>
    <property type="project" value="UniProtKB-UniRule"/>
</dbReference>
<dbReference type="Gene3D" id="4.10.830.30">
    <property type="entry name" value="Ribosomal protein L31"/>
    <property type="match status" value="1"/>
</dbReference>
<dbReference type="HAMAP" id="MF_00501">
    <property type="entry name" value="Ribosomal_bL31_1"/>
    <property type="match status" value="1"/>
</dbReference>
<dbReference type="InterPro" id="IPR034704">
    <property type="entry name" value="Ribosomal_bL28/bL31-like_sf"/>
</dbReference>
<dbReference type="InterPro" id="IPR002150">
    <property type="entry name" value="Ribosomal_bL31"/>
</dbReference>
<dbReference type="InterPro" id="IPR027491">
    <property type="entry name" value="Ribosomal_bL31_A"/>
</dbReference>
<dbReference type="InterPro" id="IPR042105">
    <property type="entry name" value="Ribosomal_bL31_sf"/>
</dbReference>
<dbReference type="NCBIfam" id="TIGR00105">
    <property type="entry name" value="L31"/>
    <property type="match status" value="1"/>
</dbReference>
<dbReference type="NCBIfam" id="NF000612">
    <property type="entry name" value="PRK00019.1"/>
    <property type="match status" value="1"/>
</dbReference>
<dbReference type="NCBIfam" id="NF001809">
    <property type="entry name" value="PRK00528.1"/>
    <property type="match status" value="1"/>
</dbReference>
<dbReference type="PANTHER" id="PTHR33280">
    <property type="entry name" value="50S RIBOSOMAL PROTEIN L31, CHLOROPLASTIC"/>
    <property type="match status" value="1"/>
</dbReference>
<dbReference type="PANTHER" id="PTHR33280:SF1">
    <property type="entry name" value="LARGE RIBOSOMAL SUBUNIT PROTEIN BL31C"/>
    <property type="match status" value="1"/>
</dbReference>
<dbReference type="Pfam" id="PF01197">
    <property type="entry name" value="Ribosomal_L31"/>
    <property type="match status" value="1"/>
</dbReference>
<dbReference type="PRINTS" id="PR01249">
    <property type="entry name" value="RIBOSOMALL31"/>
</dbReference>
<dbReference type="SUPFAM" id="SSF143800">
    <property type="entry name" value="L28p-like"/>
    <property type="match status" value="1"/>
</dbReference>
<dbReference type="PROSITE" id="PS01143">
    <property type="entry name" value="RIBOSOMAL_L31"/>
    <property type="match status" value="1"/>
</dbReference>
<protein>
    <recommendedName>
        <fullName evidence="1">Large ribosomal subunit protein bL31</fullName>
    </recommendedName>
    <alternativeName>
        <fullName evidence="2">50S ribosomal protein L31</fullName>
    </alternativeName>
</protein>
<accession>Q3AW65</accession>
<gene>
    <name evidence="1" type="primary">rpmE</name>
    <name evidence="1" type="synonym">rpl31</name>
    <name type="ordered locus">Syncc9902_1983</name>
</gene>
<reference key="1">
    <citation type="submission" date="2005-08" db="EMBL/GenBank/DDBJ databases">
        <title>Complete sequence of Synechococcus sp. CC9902.</title>
        <authorList>
            <person name="Copeland A."/>
            <person name="Lucas S."/>
            <person name="Lapidus A."/>
            <person name="Barry K."/>
            <person name="Detter J.C."/>
            <person name="Glavina T."/>
            <person name="Hammon N."/>
            <person name="Israni S."/>
            <person name="Pitluck S."/>
            <person name="Martinez M."/>
            <person name="Schmutz J."/>
            <person name="Larimer F."/>
            <person name="Land M."/>
            <person name="Kyrpides N."/>
            <person name="Ivanova N."/>
            <person name="Richardson P."/>
        </authorList>
    </citation>
    <scope>NUCLEOTIDE SEQUENCE [LARGE SCALE GENOMIC DNA]</scope>
    <source>
        <strain>CC9902</strain>
    </source>
</reference>
<organism>
    <name type="scientific">Synechococcus sp. (strain CC9902)</name>
    <dbReference type="NCBI Taxonomy" id="316279"/>
    <lineage>
        <taxon>Bacteria</taxon>
        <taxon>Bacillati</taxon>
        <taxon>Cyanobacteriota</taxon>
        <taxon>Cyanophyceae</taxon>
        <taxon>Synechococcales</taxon>
        <taxon>Synechococcaceae</taxon>
        <taxon>Synechococcus</taxon>
    </lineage>
</organism>
<proteinExistence type="inferred from homology"/>
<keyword id="KW-1185">Reference proteome</keyword>
<keyword id="KW-0687">Ribonucleoprotein</keyword>
<keyword id="KW-0689">Ribosomal protein</keyword>
<keyword id="KW-0694">RNA-binding</keyword>
<keyword id="KW-0699">rRNA-binding</keyword>
<comment type="function">
    <text evidence="1">Binds the 23S rRNA.</text>
</comment>
<comment type="subunit">
    <text evidence="1">Part of the 50S ribosomal subunit.</text>
</comment>
<comment type="similarity">
    <text evidence="1">Belongs to the bacterial ribosomal protein bL31 family. Type A subfamily.</text>
</comment>
<feature type="chain" id="PRO_0000259235" description="Large ribosomal subunit protein bL31">
    <location>
        <begin position="1"/>
        <end position="79"/>
    </location>
</feature>